<evidence type="ECO:0000256" key="1">
    <source>
        <dbReference type="SAM" id="MobiDB-lite"/>
    </source>
</evidence>
<evidence type="ECO:0000269" key="2">
    <source>
    </source>
</evidence>
<evidence type="ECO:0000269" key="3">
    <source>
    </source>
</evidence>
<evidence type="ECO:0000305" key="4"/>
<evidence type="ECO:0007744" key="5">
    <source>
    </source>
</evidence>
<protein>
    <recommendedName>
        <fullName>Protein CAF130</fullName>
    </recommendedName>
    <alternativeName>
        <fullName>130 kDa CCR4-associated factor</fullName>
    </alternativeName>
</protein>
<accession>P53280</accession>
<accession>D6VUR6</accession>
<dbReference type="EMBL" id="Z72919">
    <property type="protein sequence ID" value="CAA97147.1"/>
    <property type="molecule type" value="Genomic_DNA"/>
</dbReference>
<dbReference type="EMBL" id="AY558112">
    <property type="protein sequence ID" value="AAS56438.1"/>
    <property type="molecule type" value="Genomic_DNA"/>
</dbReference>
<dbReference type="EMBL" id="BK006941">
    <property type="protein sequence ID" value="DAA08227.1"/>
    <property type="molecule type" value="Genomic_DNA"/>
</dbReference>
<dbReference type="PIR" id="S64443">
    <property type="entry name" value="S64443"/>
</dbReference>
<dbReference type="RefSeq" id="NP_011650.3">
    <property type="nucleotide sequence ID" value="NM_001181263.3"/>
</dbReference>
<dbReference type="BioGRID" id="33382">
    <property type="interactions" value="167"/>
</dbReference>
<dbReference type="ComplexPortal" id="CPX-1800">
    <property type="entry name" value="CCR4-NOT mRNA deadenylase complex"/>
</dbReference>
<dbReference type="DIP" id="DIP-2683N"/>
<dbReference type="FunCoup" id="P53280">
    <property type="interactions" value="117"/>
</dbReference>
<dbReference type="IntAct" id="P53280">
    <property type="interactions" value="11"/>
</dbReference>
<dbReference type="MINT" id="P53280"/>
<dbReference type="STRING" id="4932.YGR134W"/>
<dbReference type="iPTMnet" id="P53280"/>
<dbReference type="PaxDb" id="4932-YGR134W"/>
<dbReference type="PeptideAtlas" id="P53280"/>
<dbReference type="TopDownProteomics" id="P53280"/>
<dbReference type="ABCD" id="P53280">
    <property type="antibodies" value="7 sequenced antibodies"/>
</dbReference>
<dbReference type="EnsemblFungi" id="YGR134W_mRNA">
    <property type="protein sequence ID" value="YGR134W"/>
    <property type="gene ID" value="YGR134W"/>
</dbReference>
<dbReference type="GeneID" id="853035"/>
<dbReference type="KEGG" id="sce:YGR134W"/>
<dbReference type="AGR" id="SGD:S000003366"/>
<dbReference type="SGD" id="S000003366">
    <property type="gene designation" value="CAF130"/>
</dbReference>
<dbReference type="VEuPathDB" id="FungiDB:YGR134W"/>
<dbReference type="eggNOG" id="ENOG502QT7N">
    <property type="taxonomic scope" value="Eukaryota"/>
</dbReference>
<dbReference type="HOGENOM" id="CLU_280757_0_0_1"/>
<dbReference type="InParanoid" id="P53280"/>
<dbReference type="OMA" id="EMLMCSG"/>
<dbReference type="OrthoDB" id="3980110at2759"/>
<dbReference type="BioCyc" id="YEAST:G3O-30840-MONOMER"/>
<dbReference type="BioGRID-ORCS" id="853035">
    <property type="hits" value="0 hits in 10 CRISPR screens"/>
</dbReference>
<dbReference type="CD-CODE" id="A777E0F8">
    <property type="entry name" value="P-body"/>
</dbReference>
<dbReference type="PRO" id="PR:P53280"/>
<dbReference type="Proteomes" id="UP000002311">
    <property type="component" value="Chromosome VII"/>
</dbReference>
<dbReference type="RNAct" id="P53280">
    <property type="molecule type" value="protein"/>
</dbReference>
<dbReference type="GO" id="GO:0030015">
    <property type="term" value="C:CCR4-NOT core complex"/>
    <property type="evidence" value="ECO:0000353"/>
    <property type="project" value="SGD"/>
</dbReference>
<dbReference type="GO" id="GO:0005829">
    <property type="term" value="C:cytosol"/>
    <property type="evidence" value="ECO:0007005"/>
    <property type="project" value="SGD"/>
</dbReference>
<dbReference type="GO" id="GO:0005634">
    <property type="term" value="C:nucleus"/>
    <property type="evidence" value="ECO:0007669"/>
    <property type="project" value="UniProtKB-SubCell"/>
</dbReference>
<dbReference type="GO" id="GO:0000289">
    <property type="term" value="P:nuclear-transcribed mRNA poly(A) tail shortening"/>
    <property type="evidence" value="ECO:0000303"/>
    <property type="project" value="ComplexPortal"/>
</dbReference>
<dbReference type="GO" id="GO:0032968">
    <property type="term" value="P:positive regulation of transcription elongation by RNA polymerase II"/>
    <property type="evidence" value="ECO:0000314"/>
    <property type="project" value="ComplexPortal"/>
</dbReference>
<comment type="function">
    <text>Acts as a component of the CCR4-NOT core complex, which in the nucleus seems to be a general transcription factor, and in the cytoplasm the major mRNA deadenylase involved in mRNA turnover.</text>
</comment>
<comment type="subunit">
    <text evidence="2">Subunit of the 1.0 MDa CCR4-NOT core complex that contains CCR4, CAF1, NOT1, NOT2, NOT3, NOT4, NOT5, CAF40 and CAF130. In the complex interacts with NOT1. The core complex probably is part of a less characterized 1.9 MDa CCR4-NOT complex.</text>
</comment>
<comment type="interaction">
    <interactant intactId="EBI-23322">
        <id>P53280</id>
    </interactant>
    <interactant intactId="EBI-3508">
        <id>P29366</id>
        <label>BEM1</label>
    </interactant>
    <organismsDiffer>false</organismsDiffer>
    <experiments>3</experiments>
</comment>
<comment type="interaction">
    <interactant intactId="EBI-23322">
        <id>P53280</id>
    </interactant>
    <interactant intactId="EBI-12139">
        <id>P25655</id>
        <label>CDC39</label>
    </interactant>
    <organismsDiffer>false</organismsDiffer>
    <experiments>7</experiments>
</comment>
<comment type="interaction">
    <interactant intactId="EBI-23322">
        <id>P53280</id>
    </interactant>
    <interactant intactId="EBI-26299">
        <id>P47086</id>
        <label>YJR011C</label>
    </interactant>
    <organismsDiffer>false</organismsDiffer>
    <experiments>4</experiments>
</comment>
<comment type="subcellular location">
    <subcellularLocation>
        <location evidence="4">Cytoplasm</location>
    </subcellularLocation>
    <subcellularLocation>
        <location evidence="4">Nucleus</location>
    </subcellularLocation>
</comment>
<comment type="miscellaneous">
    <text evidence="3">Present with 1320 molecules/cell in log phase SD medium.</text>
</comment>
<name>CF130_YEAST</name>
<feature type="chain" id="PRO_0000202824" description="Protein CAF130">
    <location>
        <begin position="1"/>
        <end position="1122"/>
    </location>
</feature>
<feature type="region of interest" description="Disordered" evidence="1">
    <location>
        <begin position="1"/>
        <end position="24"/>
    </location>
</feature>
<feature type="compositionally biased region" description="Polar residues" evidence="1">
    <location>
        <begin position="11"/>
        <end position="24"/>
    </location>
</feature>
<feature type="modified residue" description="Phosphoserine" evidence="5">
    <location>
        <position position="1042"/>
    </location>
</feature>
<gene>
    <name type="primary">CAF130</name>
    <name type="ordered locus">YGR134W</name>
</gene>
<keyword id="KW-0010">Activator</keyword>
<keyword id="KW-0963">Cytoplasm</keyword>
<keyword id="KW-0539">Nucleus</keyword>
<keyword id="KW-0597">Phosphoprotein</keyword>
<keyword id="KW-1185">Reference proteome</keyword>
<keyword id="KW-0678">Repressor</keyword>
<keyword id="KW-0804">Transcription</keyword>
<keyword id="KW-0805">Transcription regulation</keyword>
<proteinExistence type="evidence at protein level"/>
<reference key="1">
    <citation type="journal article" date="1997" name="Nature">
        <title>The nucleotide sequence of Saccharomyces cerevisiae chromosome VII.</title>
        <authorList>
            <person name="Tettelin H."/>
            <person name="Agostoni-Carbone M.L."/>
            <person name="Albermann K."/>
            <person name="Albers M."/>
            <person name="Arroyo J."/>
            <person name="Backes U."/>
            <person name="Barreiros T."/>
            <person name="Bertani I."/>
            <person name="Bjourson A.J."/>
            <person name="Brueckner M."/>
            <person name="Bruschi C.V."/>
            <person name="Carignani G."/>
            <person name="Castagnoli L."/>
            <person name="Cerdan E."/>
            <person name="Clemente M.L."/>
            <person name="Coblenz A."/>
            <person name="Coglievina M."/>
            <person name="Coissac E."/>
            <person name="Defoor E."/>
            <person name="Del Bino S."/>
            <person name="Delius H."/>
            <person name="Delneri D."/>
            <person name="de Wergifosse P."/>
            <person name="Dujon B."/>
            <person name="Durand P."/>
            <person name="Entian K.-D."/>
            <person name="Eraso P."/>
            <person name="Escribano V."/>
            <person name="Fabiani L."/>
            <person name="Fartmann B."/>
            <person name="Feroli F."/>
            <person name="Feuermann M."/>
            <person name="Frontali L."/>
            <person name="Garcia-Gonzalez M."/>
            <person name="Garcia-Saez M.I."/>
            <person name="Goffeau A."/>
            <person name="Guerreiro P."/>
            <person name="Hani J."/>
            <person name="Hansen M."/>
            <person name="Hebling U."/>
            <person name="Hernandez K."/>
            <person name="Heumann K."/>
            <person name="Hilger F."/>
            <person name="Hofmann B."/>
            <person name="Indge K.J."/>
            <person name="James C.M."/>
            <person name="Klima R."/>
            <person name="Koetter P."/>
            <person name="Kramer B."/>
            <person name="Kramer W."/>
            <person name="Lauquin G."/>
            <person name="Leuther H."/>
            <person name="Louis E.J."/>
            <person name="Maillier E."/>
            <person name="Marconi A."/>
            <person name="Martegani E."/>
            <person name="Mazon M.J."/>
            <person name="Mazzoni C."/>
            <person name="McReynolds A.D.K."/>
            <person name="Melchioretto P."/>
            <person name="Mewes H.-W."/>
            <person name="Minenkova O."/>
            <person name="Mueller-Auer S."/>
            <person name="Nawrocki A."/>
            <person name="Netter P."/>
            <person name="Neu R."/>
            <person name="Nombela C."/>
            <person name="Oliver S.G."/>
            <person name="Panzeri L."/>
            <person name="Paoluzi S."/>
            <person name="Plevani P."/>
            <person name="Portetelle D."/>
            <person name="Portillo F."/>
            <person name="Potier S."/>
            <person name="Purnelle B."/>
            <person name="Rieger M."/>
            <person name="Riles L."/>
            <person name="Rinaldi T."/>
            <person name="Robben J."/>
            <person name="Rodrigues-Pousada C."/>
            <person name="Rodriguez-Belmonte E."/>
            <person name="Rodriguez-Torres A.M."/>
            <person name="Rose M."/>
            <person name="Ruzzi M."/>
            <person name="Saliola M."/>
            <person name="Sanchez-Perez M."/>
            <person name="Schaefer B."/>
            <person name="Schaefer M."/>
            <person name="Scharfe M."/>
            <person name="Schmidheini T."/>
            <person name="Schreer A."/>
            <person name="Skala J."/>
            <person name="Souciet J.-L."/>
            <person name="Steensma H.Y."/>
            <person name="Talla E."/>
            <person name="Thierry A."/>
            <person name="Vandenbol M."/>
            <person name="van der Aart Q.J.M."/>
            <person name="Van Dyck L."/>
            <person name="Vanoni M."/>
            <person name="Verhasselt P."/>
            <person name="Voet M."/>
            <person name="Volckaert G."/>
            <person name="Wambutt R."/>
            <person name="Watson M.D."/>
            <person name="Weber N."/>
            <person name="Wedler E."/>
            <person name="Wedler H."/>
            <person name="Wipfli P."/>
            <person name="Wolf K."/>
            <person name="Wright L.F."/>
            <person name="Zaccaria P."/>
            <person name="Zimmermann M."/>
            <person name="Zollner A."/>
            <person name="Kleine K."/>
        </authorList>
    </citation>
    <scope>NUCLEOTIDE SEQUENCE [LARGE SCALE GENOMIC DNA]</scope>
    <source>
        <strain>ATCC 204508 / S288c</strain>
    </source>
</reference>
<reference key="2">
    <citation type="journal article" date="2014" name="G3 (Bethesda)">
        <title>The reference genome sequence of Saccharomyces cerevisiae: Then and now.</title>
        <authorList>
            <person name="Engel S.R."/>
            <person name="Dietrich F.S."/>
            <person name="Fisk D.G."/>
            <person name="Binkley G."/>
            <person name="Balakrishnan R."/>
            <person name="Costanzo M.C."/>
            <person name="Dwight S.S."/>
            <person name="Hitz B.C."/>
            <person name="Karra K."/>
            <person name="Nash R.S."/>
            <person name="Weng S."/>
            <person name="Wong E.D."/>
            <person name="Lloyd P."/>
            <person name="Skrzypek M.S."/>
            <person name="Miyasato S.R."/>
            <person name="Simison M."/>
            <person name="Cherry J.M."/>
        </authorList>
    </citation>
    <scope>GENOME REANNOTATION</scope>
    <source>
        <strain>ATCC 204508 / S288c</strain>
    </source>
</reference>
<reference key="3">
    <citation type="journal article" date="2007" name="Genome Res.">
        <title>Approaching a complete repository of sequence-verified protein-encoding clones for Saccharomyces cerevisiae.</title>
        <authorList>
            <person name="Hu Y."/>
            <person name="Rolfs A."/>
            <person name="Bhullar B."/>
            <person name="Murthy T.V.S."/>
            <person name="Zhu C."/>
            <person name="Berger M.F."/>
            <person name="Camargo A.A."/>
            <person name="Kelley F."/>
            <person name="McCarron S."/>
            <person name="Jepson D."/>
            <person name="Richardson A."/>
            <person name="Raphael J."/>
            <person name="Moreira D."/>
            <person name="Taycher E."/>
            <person name="Zuo D."/>
            <person name="Mohr S."/>
            <person name="Kane M.F."/>
            <person name="Williamson J."/>
            <person name="Simpson A.J.G."/>
            <person name="Bulyk M.L."/>
            <person name="Harlow E."/>
            <person name="Marsischky G."/>
            <person name="Kolodner R.D."/>
            <person name="LaBaer J."/>
        </authorList>
    </citation>
    <scope>NUCLEOTIDE SEQUENCE [GENOMIC DNA]</scope>
    <source>
        <strain>ATCC 204508 / S288c</strain>
    </source>
</reference>
<reference key="4">
    <citation type="journal article" date="2001" name="J. Mol. Biol.">
        <title>Purification and characterization of the 1.0 MDa CCR4-NOT complex identifies two novel components of the complex.</title>
        <authorList>
            <person name="Chen J."/>
            <person name="Rappsilber J."/>
            <person name="Chiang Y.C."/>
            <person name="Russell P."/>
            <person name="Mann M."/>
            <person name="Denis C.L."/>
        </authorList>
    </citation>
    <scope>IDENTIFICATION IN THE CCR4-NOT CORE COMPLEX</scope>
    <scope>INTERACTION WITH NOT1</scope>
</reference>
<reference key="5">
    <citation type="journal article" date="2003" name="Nature">
        <title>Global analysis of protein expression in yeast.</title>
        <authorList>
            <person name="Ghaemmaghami S."/>
            <person name="Huh W.-K."/>
            <person name="Bower K."/>
            <person name="Howson R.W."/>
            <person name="Belle A."/>
            <person name="Dephoure N."/>
            <person name="O'Shea E.K."/>
            <person name="Weissman J.S."/>
        </authorList>
    </citation>
    <scope>LEVEL OF PROTEIN EXPRESSION [LARGE SCALE ANALYSIS]</scope>
</reference>
<reference key="6">
    <citation type="journal article" date="2008" name="Mol. Cell. Proteomics">
        <title>A multidimensional chromatography technology for in-depth phosphoproteome analysis.</title>
        <authorList>
            <person name="Albuquerque C.P."/>
            <person name="Smolka M.B."/>
            <person name="Payne S.H."/>
            <person name="Bafna V."/>
            <person name="Eng J."/>
            <person name="Zhou H."/>
        </authorList>
    </citation>
    <scope>PHOSPHORYLATION [LARGE SCALE ANALYSIS] AT SER-1042</scope>
    <scope>IDENTIFICATION BY MASS SPECTROMETRY [LARGE SCALE ANALYSIS]</scope>
</reference>
<reference key="7">
    <citation type="journal article" date="2009" name="Science">
        <title>Global analysis of Cdk1 substrate phosphorylation sites provides insights into evolution.</title>
        <authorList>
            <person name="Holt L.J."/>
            <person name="Tuch B.B."/>
            <person name="Villen J."/>
            <person name="Johnson A.D."/>
            <person name="Gygi S.P."/>
            <person name="Morgan D.O."/>
        </authorList>
    </citation>
    <scope>IDENTIFICATION BY MASS SPECTROMETRY [LARGE SCALE ANALYSIS]</scope>
</reference>
<reference key="8">
    <citation type="journal article" date="2012" name="Proc. Natl. Acad. Sci. U.S.A.">
        <title>N-terminal acetylome analyses and functional insights of the N-terminal acetyltransferase NatB.</title>
        <authorList>
            <person name="Van Damme P."/>
            <person name="Lasa M."/>
            <person name="Polevoda B."/>
            <person name="Gazquez C."/>
            <person name="Elosegui-Artola A."/>
            <person name="Kim D.S."/>
            <person name="De Juan-Pardo E."/>
            <person name="Demeyer K."/>
            <person name="Hole K."/>
            <person name="Larrea E."/>
            <person name="Timmerman E."/>
            <person name="Prieto J."/>
            <person name="Arnesen T."/>
            <person name="Sherman F."/>
            <person name="Gevaert K."/>
            <person name="Aldabe R."/>
        </authorList>
    </citation>
    <scope>IDENTIFICATION BY MASS SPECTROMETRY [LARGE SCALE ANALYSIS]</scope>
</reference>
<organism>
    <name type="scientific">Saccharomyces cerevisiae (strain ATCC 204508 / S288c)</name>
    <name type="common">Baker's yeast</name>
    <dbReference type="NCBI Taxonomy" id="559292"/>
    <lineage>
        <taxon>Eukaryota</taxon>
        <taxon>Fungi</taxon>
        <taxon>Dikarya</taxon>
        <taxon>Ascomycota</taxon>
        <taxon>Saccharomycotina</taxon>
        <taxon>Saccharomycetes</taxon>
        <taxon>Saccharomycetales</taxon>
        <taxon>Saccharomycetaceae</taxon>
        <taxon>Saccharomyces</taxon>
    </lineage>
</organism>
<sequence length="1122" mass="128780">MTKKKAATNYAERQNLASEDSSGDSVHFKDFIPLQELLKDKNYVPSVENLEKILYNETMFNDQKICSNLLLEALIITLFTTISGKSALRLIQTSSLKERKSWAQSFENNSSSYASIVLSWKDNDILLLKFLRFLLANKTAPLQINRYNLPEYKLPLSFLIVSKITIPSILLNETYNLLKDYLYSITGRIESLISCSSTFDKPALVVRKILKDYNRMIECRNFYFWYSFNAENRVNLTFSDNISLLMENDEGNAGSGLDDSRFDHQKQPREAIMGRTINDQEQIYSFELNQDGTLEIPNVMEHSLLRHELLFKILNLTTVLTPLLELQFSTLCGLVDPLMQPTPNDKHIISIDFLFQLFLGLMSQSIKTSQEHNDHYDWKFYMCFNMQKIIDATMLRLNCFDFDILNSVNNTDNAVHWKTQLHRWLPHGLNTQDLELLYMIDILAVYTIYKLYEKIPIQLNPFLFSLISLWKNLSCVILLALEIDRIEEENGTYETPLMVRATIRGAAALRSVIATVLNGLVKNNDHDFKHESLNTFMSPYGRKLCHGALYADLRSHTASLLALGASIEDVTDLFADLQSGDRFDEDIRYMFDYECEDYDESFSESDHGGLDESVVNPTEKIASGSNNVFFRRRCNCIFNDDKLVAEDGANEAFGSTNSENVEGAMHNNRNAVHNATTATSDHVVTSPNPLSVRSRSTFEFDYSGEDWRDVPRDFNMYYSPSYSFIHEPKLDVIFSLTLRGATEKLNKEESILLVRSVASCVRNEQDQMILADLESNFSASINGDVEGEGNTKMSKIDNEDLRRTTPDDIYEIWSEESAFERMLNVNHDVAWRLMDEMLMCTGYRRILIWFLTHLELKHSLIYYVFELIMGLRGKPFSGEASDQDKKDDMIYEILKKKQKNEDASGLPFSRQGPIVLSDIETKMLLQEFFMNAAIFLSSKNNEEENEDGEKISLYSLGLVRLICYMVQTLIANDKFFFTKSECTFELQTLLMTWIGILPEAKDLFFKIKTRLAMEEEDSADTMQHEGRKNSDIEKKLNAKPASELNLKLLNLFPSKPANKDDSSPINTLRSFIADYSFDTQVNPPGRRVVFYDGKILPLPKADKPIPLHEYITLAELDVGDSE</sequence>